<keyword id="KW-0961">Cell wall biogenesis/degradation</keyword>
<keyword id="KW-1015">Disulfide bond</keyword>
<keyword id="KW-0325">Glycoprotein</keyword>
<keyword id="KW-0326">Glycosidase</keyword>
<keyword id="KW-0378">Hydrolase</keyword>
<keyword id="KW-1185">Reference proteome</keyword>
<keyword id="KW-0677">Repeat</keyword>
<keyword id="KW-0964">Secreted</keyword>
<keyword id="KW-0732">Signal</keyword>
<gene>
    <name evidence="6" type="primary">rpg16</name>
    <name type="ORF">RO3G_06021</name>
</gene>
<feature type="signal peptide" evidence="2">
    <location>
        <begin position="1"/>
        <end position="26"/>
    </location>
</feature>
<feature type="chain" id="PRO_0000432727" description="Exopolygalacturonase rpg16" evidence="2">
    <location>
        <begin position="27"/>
        <end position="385"/>
    </location>
</feature>
<feature type="repeat" description="PbH1 1" evidence="2">
    <location>
        <begin position="165"/>
        <end position="195"/>
    </location>
</feature>
<feature type="repeat" description="PbH1 2" evidence="2">
    <location>
        <begin position="219"/>
        <end position="241"/>
    </location>
</feature>
<feature type="repeat" description="PbH1 3" evidence="2">
    <location>
        <begin position="249"/>
        <end position="270"/>
    </location>
</feature>
<feature type="repeat" description="PbH1 4" evidence="2">
    <location>
        <begin position="278"/>
        <end position="299"/>
    </location>
</feature>
<feature type="repeat" description="PbH1 5" evidence="2">
    <location>
        <begin position="350"/>
        <end position="376"/>
    </location>
</feature>
<feature type="active site" description="Proton donor" evidence="1">
    <location>
        <position position="210"/>
    </location>
</feature>
<feature type="active site" evidence="1">
    <location>
        <position position="233"/>
    </location>
</feature>
<feature type="glycosylation site" description="N-linked (GlcNAc...) asparagine" evidence="3">
    <location>
        <position position="143"/>
    </location>
</feature>
<feature type="glycosylation site" description="N-linked (GlcNAc...) asparagine" evidence="3">
    <location>
        <position position="161"/>
    </location>
</feature>
<feature type="glycosylation site" description="N-linked (GlcNAc...) asparagine" evidence="3">
    <location>
        <position position="164"/>
    </location>
</feature>
<feature type="glycosylation site" description="N-linked (GlcNAc...) asparagine" evidence="3">
    <location>
        <position position="180"/>
    </location>
</feature>
<feature type="glycosylation site" description="N-linked (GlcNAc...) asparagine" evidence="3">
    <location>
        <position position="218"/>
    </location>
</feature>
<feature type="glycosylation site" description="N-linked (GlcNAc...) asparagine" evidence="3">
    <location>
        <position position="226"/>
    </location>
</feature>
<feature type="glycosylation site" description="N-linked (GlcNAc...) asparagine" evidence="3">
    <location>
        <position position="256"/>
    </location>
</feature>
<feature type="glycosylation site" description="N-linked (GlcNAc...) asparagine" evidence="3">
    <location>
        <position position="282"/>
    </location>
</feature>
<feature type="glycosylation site" description="N-linked (GlcNAc...) asparagine" evidence="3">
    <location>
        <position position="343"/>
    </location>
</feature>
<feature type="glycosylation site" description="N-linked (GlcNAc...) asparagine" evidence="3">
    <location>
        <position position="359"/>
    </location>
</feature>
<feature type="glycosylation site" description="N-linked (GlcNAc...) asparagine" evidence="3">
    <location>
        <position position="365"/>
    </location>
</feature>
<feature type="disulfide bond" evidence="1">
    <location>
        <begin position="212"/>
        <end position="229"/>
    </location>
</feature>
<feature type="disulfide bond" evidence="1">
    <location>
        <begin position="344"/>
        <end position="350"/>
    </location>
</feature>
<dbReference type="EC" id="3.2.1.67" evidence="4"/>
<dbReference type="EMBL" id="CH476735">
    <property type="protein sequence ID" value="EIE81316.1"/>
    <property type="molecule type" value="Genomic_DNA"/>
</dbReference>
<dbReference type="SMR" id="I1BYN6"/>
<dbReference type="STRING" id="246409.I1BYN6"/>
<dbReference type="GlyCosmos" id="I1BYN6">
    <property type="glycosylation" value="11 sites, No reported glycans"/>
</dbReference>
<dbReference type="VEuPathDB" id="FungiDB:RO3G_06021"/>
<dbReference type="eggNOG" id="ENOG502QPPR">
    <property type="taxonomic scope" value="Eukaryota"/>
</dbReference>
<dbReference type="InParanoid" id="I1BYN6"/>
<dbReference type="OMA" id="WFNIIIN"/>
<dbReference type="OrthoDB" id="4683at4827"/>
<dbReference type="Proteomes" id="UP000009138">
    <property type="component" value="Unassembled WGS sequence"/>
</dbReference>
<dbReference type="GO" id="GO:0005576">
    <property type="term" value="C:extracellular region"/>
    <property type="evidence" value="ECO:0007669"/>
    <property type="project" value="UniProtKB-SubCell"/>
</dbReference>
<dbReference type="GO" id="GO:0047911">
    <property type="term" value="F:galacturan 1,4-alpha-galacturonidase activity"/>
    <property type="evidence" value="ECO:0007669"/>
    <property type="project" value="UniProtKB-EC"/>
</dbReference>
<dbReference type="GO" id="GO:0004650">
    <property type="term" value="F:polygalacturonase activity"/>
    <property type="evidence" value="ECO:0007669"/>
    <property type="project" value="InterPro"/>
</dbReference>
<dbReference type="GO" id="GO:0046576">
    <property type="term" value="F:rhamnogalacturonan alpha-L-rhamnopyranosyl-(1-&gt;4)-alpha-D-galactopyranosyluronide lyase activity"/>
    <property type="evidence" value="ECO:0007669"/>
    <property type="project" value="UniProtKB-ARBA"/>
</dbReference>
<dbReference type="GO" id="GO:0005975">
    <property type="term" value="P:carbohydrate metabolic process"/>
    <property type="evidence" value="ECO:0007669"/>
    <property type="project" value="InterPro"/>
</dbReference>
<dbReference type="GO" id="GO:0071555">
    <property type="term" value="P:cell wall organization"/>
    <property type="evidence" value="ECO:0007669"/>
    <property type="project" value="UniProtKB-KW"/>
</dbReference>
<dbReference type="Gene3D" id="2.160.20.10">
    <property type="entry name" value="Single-stranded right-handed beta-helix, Pectin lyase-like"/>
    <property type="match status" value="1"/>
</dbReference>
<dbReference type="InterPro" id="IPR000743">
    <property type="entry name" value="Glyco_hydro_28"/>
</dbReference>
<dbReference type="InterPro" id="IPR012334">
    <property type="entry name" value="Pectin_lyas_fold"/>
</dbReference>
<dbReference type="InterPro" id="IPR011050">
    <property type="entry name" value="Pectin_lyase_fold/virulence"/>
</dbReference>
<dbReference type="PANTHER" id="PTHR31736">
    <property type="match status" value="1"/>
</dbReference>
<dbReference type="PANTHER" id="PTHR31736:SF19">
    <property type="entry name" value="PECTIN LYASE SUPERFAMILY PROTEIN-RELATED"/>
    <property type="match status" value="1"/>
</dbReference>
<dbReference type="Pfam" id="PF00295">
    <property type="entry name" value="Glyco_hydro_28"/>
    <property type="match status" value="1"/>
</dbReference>
<dbReference type="SUPFAM" id="SSF51126">
    <property type="entry name" value="Pectin lyase-like"/>
    <property type="match status" value="1"/>
</dbReference>
<accession>I1BYN6</accession>
<proteinExistence type="evidence at protein level"/>
<reference key="1">
    <citation type="journal article" date="2009" name="PLoS Genet.">
        <title>Genomic analysis of the basal lineage fungus Rhizopus oryzae reveals a whole-genome duplication.</title>
        <authorList>
            <person name="Ma L.-J."/>
            <person name="Ibrahim A.S."/>
            <person name="Skory C."/>
            <person name="Grabherr M.G."/>
            <person name="Burger G."/>
            <person name="Butler M."/>
            <person name="Elias M."/>
            <person name="Idnurm A."/>
            <person name="Lang B.F."/>
            <person name="Sone T."/>
            <person name="Abe A."/>
            <person name="Calvo S.E."/>
            <person name="Corrochano L.M."/>
            <person name="Engels R."/>
            <person name="Fu J."/>
            <person name="Hansberg W."/>
            <person name="Kim J.-M."/>
            <person name="Kodira C.D."/>
            <person name="Koehrsen M.J."/>
            <person name="Liu B."/>
            <person name="Miranda-Saavedra D."/>
            <person name="O'Leary S."/>
            <person name="Ortiz-Castellanos L."/>
            <person name="Poulter R."/>
            <person name="Rodriguez-Romero J."/>
            <person name="Ruiz-Herrera J."/>
            <person name="Shen Y.-Q."/>
            <person name="Zeng Q."/>
            <person name="Galagan J."/>
            <person name="Birren B.W."/>
            <person name="Cuomo C.A."/>
            <person name="Wickes B.L."/>
        </authorList>
    </citation>
    <scope>NUCLEOTIDE SEQUENCE [LARGE SCALE GENOMIC DNA]</scope>
    <source>
        <strain>RA 99-880 / ATCC MYA-4621 / FGSC 9543 / NRRL 43880</strain>
    </source>
</reference>
<reference key="2">
    <citation type="journal article" date="2008" name="Fungal Genet. Biol.">
        <title>Identification, biochemical characterization, and evolution of the Rhizopus oryzae 99-880 polygalacturonase gene family.</title>
        <authorList>
            <person name="Mertens J.A."/>
            <person name="Burdick R.C."/>
            <person name="Rooney A.P."/>
        </authorList>
    </citation>
    <scope>FUNCTION</scope>
    <scope>CATALYTIC ACTIVITY</scope>
</reference>
<reference key="3">
    <citation type="journal article" date="2011" name="Curr. Microbiol.">
        <title>Expression and characterization of fifteen Rhizopus oryzae 99-880 polygalacturonase enzymes in Pichia pastoris.</title>
        <authorList>
            <person name="Mertens J.A."/>
            <person name="Bowman M.J."/>
        </authorList>
    </citation>
    <scope>FUNCTION</scope>
    <scope>CATALYTIC ACTIVITY</scope>
    <scope>BIOPHYSICOCHEMICAL PROPERTIES</scope>
    <scope>GLYCOSYLATION</scope>
</reference>
<organism>
    <name type="scientific">Rhizopus delemar (strain RA 99-880 / ATCC MYA-4621 / FGSC 9543 / NRRL 43880)</name>
    <name type="common">Mucormycosis agent</name>
    <name type="synonym">Rhizopus arrhizus var. delemar</name>
    <dbReference type="NCBI Taxonomy" id="246409"/>
    <lineage>
        <taxon>Eukaryota</taxon>
        <taxon>Fungi</taxon>
        <taxon>Fungi incertae sedis</taxon>
        <taxon>Mucoromycota</taxon>
        <taxon>Mucoromycotina</taxon>
        <taxon>Mucoromycetes</taxon>
        <taxon>Mucorales</taxon>
        <taxon>Mucorineae</taxon>
        <taxon>Rhizopodaceae</taxon>
        <taxon>Rhizopus</taxon>
    </lineage>
</organism>
<name>RPG16_RHIO9</name>
<comment type="function">
    <text evidence="4 5">Specific in hydrolyzing the terminal glycosidic bond of polygalacturonic acid and oligogalacturonates.</text>
</comment>
<comment type="catalytic activity">
    <reaction evidence="4 5">
        <text>[(1-&gt;4)-alpha-D-galacturonosyl](n) + H2O = alpha-D-galacturonate + [(1-&gt;4)-alpha-D-galacturonosyl](n-1)</text>
        <dbReference type="Rhea" id="RHEA:14117"/>
        <dbReference type="Rhea" id="RHEA-COMP:14570"/>
        <dbReference type="Rhea" id="RHEA-COMP:14572"/>
        <dbReference type="ChEBI" id="CHEBI:15377"/>
        <dbReference type="ChEBI" id="CHEBI:58658"/>
        <dbReference type="ChEBI" id="CHEBI:140523"/>
        <dbReference type="EC" id="3.2.1.67"/>
    </reaction>
</comment>
<comment type="biophysicochemical properties">
    <phDependence>
        <text evidence="5">Optimum pH is 4.0.</text>
    </phDependence>
    <temperatureDependence>
        <text evidence="5">Optimum temperature is 30 degrees Celsius.</text>
    </temperatureDependence>
</comment>
<comment type="subcellular location">
    <subcellularLocation>
        <location evidence="8 9">Secreted</location>
    </subcellularLocation>
</comment>
<comment type="PTM">
    <text evidence="5">N-glycosylated.</text>
</comment>
<comment type="similarity">
    <text evidence="7">Belongs to the glycosyl hydrolase 28 family.</text>
</comment>
<evidence type="ECO:0000250" key="1">
    <source>
        <dbReference type="UniProtKB" id="O74213"/>
    </source>
</evidence>
<evidence type="ECO:0000255" key="2"/>
<evidence type="ECO:0000255" key="3">
    <source>
        <dbReference type="PROSITE-ProRule" id="PRU00498"/>
    </source>
</evidence>
<evidence type="ECO:0000269" key="4">
    <source>
    </source>
</evidence>
<evidence type="ECO:0000269" key="5">
    <source>
    </source>
</evidence>
<evidence type="ECO:0000303" key="6">
    <source>
    </source>
</evidence>
<evidence type="ECO:0000305" key="7"/>
<evidence type="ECO:0000305" key="8">
    <source>
    </source>
</evidence>
<evidence type="ECO:0000305" key="9">
    <source>
    </source>
</evidence>
<sequence>MVRFTSFTSPFSAILLLSFGINKVATASTNTCVVAKSDSDDAITILEAFEKCKTGGTVVFPKDSTYNLNSIVTTSGLKNVNINLAGTINLPVREESYRNGDYYIQIKGTNIKMYGGGTINGNGQAWWDALDRTAPSVLRIAANDSSFGNFNIINSPRAHLNVTNSTNLLLHDFIIHTVSNNSNPAKNTDALDLYHSSGVIFRDSDLTIGDDCLAVKENVTKVTVSNITCRGGHGYSIGSLGMGGRRDFVTQVNVYNSTCIDCQNGVRVKTWAGGKGFVEDINFTDIYLEKAENPIIITTHYCDKNEMGYCNNNYETSLDIAGVHFKNIHGSGSDKGKPIINLNCSTESPCSDVTLTNINISKASNNTKNVCVNLKGSDKIPECSS</sequence>
<protein>
    <recommendedName>
        <fullName evidence="6">Exopolygalacturonase rpg16</fullName>
        <ecNumber evidence="4">3.2.1.67</ecNumber>
    </recommendedName>
    <alternativeName>
        <fullName evidence="7">Galacturan 1,4-alpha-galacturonidase rpg16</fullName>
    </alternativeName>
    <alternativeName>
        <fullName evidence="7">Poly(1,4-alpha-D-galacturonide)galacturonohydrolase rpg16</fullName>
    </alternativeName>
</protein>